<feature type="chain" id="PRO_0000424024" description="Receptor expression-enhancing protein 4">
    <location>
        <begin position="1"/>
        <end position="261"/>
    </location>
</feature>
<feature type="transmembrane region" description="Helical" evidence="2">
    <location>
        <begin position="1"/>
        <end position="21"/>
    </location>
</feature>
<feature type="transmembrane region" description="Helical" evidence="2">
    <location>
        <begin position="35"/>
        <end position="55"/>
    </location>
</feature>
<feature type="region of interest" description="Disordered" evidence="3">
    <location>
        <begin position="177"/>
        <end position="261"/>
    </location>
</feature>
<feature type="compositionally biased region" description="Basic and acidic residues" evidence="3">
    <location>
        <begin position="191"/>
        <end position="202"/>
    </location>
</feature>
<dbReference type="EMBL" id="CR926301">
    <property type="protein sequence ID" value="CAJ83633.1"/>
    <property type="molecule type" value="mRNA"/>
</dbReference>
<dbReference type="EMBL" id="AAMC01015449">
    <property type="status" value="NOT_ANNOTATED_CDS"/>
    <property type="molecule type" value="Genomic_DNA"/>
</dbReference>
<dbReference type="EMBL" id="BC090588">
    <property type="protein sequence ID" value="AAH90588.1"/>
    <property type="molecule type" value="mRNA"/>
</dbReference>
<dbReference type="RefSeq" id="NP_001016224.1">
    <property type="nucleotide sequence ID" value="NM_001016224.2"/>
</dbReference>
<dbReference type="FunCoup" id="Q5BL63">
    <property type="interactions" value="571"/>
</dbReference>
<dbReference type="PaxDb" id="8364-ENSXETP00000023109"/>
<dbReference type="DNASU" id="548978"/>
<dbReference type="GeneID" id="548978"/>
<dbReference type="KEGG" id="xtr:548978"/>
<dbReference type="AGR" id="Xenbase:XB-GENE-982259"/>
<dbReference type="CTD" id="80346"/>
<dbReference type="Xenbase" id="XB-GENE-982259">
    <property type="gene designation" value="reep4"/>
</dbReference>
<dbReference type="eggNOG" id="KOG1726">
    <property type="taxonomic scope" value="Eukaryota"/>
</dbReference>
<dbReference type="InParanoid" id="Q5BL63"/>
<dbReference type="OMA" id="YRDALYP"/>
<dbReference type="OrthoDB" id="434647at2759"/>
<dbReference type="TreeFam" id="TF314177"/>
<dbReference type="Proteomes" id="UP000008143">
    <property type="component" value="Chromosome 3"/>
</dbReference>
<dbReference type="Bgee" id="ENSXETG00000010537">
    <property type="expression patterns" value="Expressed in 2-cell stage embryo and 19 other cell types or tissues"/>
</dbReference>
<dbReference type="GO" id="GO:0005783">
    <property type="term" value="C:endoplasmic reticulum"/>
    <property type="evidence" value="ECO:0000250"/>
    <property type="project" value="UniProtKB"/>
</dbReference>
<dbReference type="GO" id="GO:0005789">
    <property type="term" value="C:endoplasmic reticulum membrane"/>
    <property type="evidence" value="ECO:0007669"/>
    <property type="project" value="UniProtKB-SubCell"/>
</dbReference>
<dbReference type="GO" id="GO:0005874">
    <property type="term" value="C:microtubule"/>
    <property type="evidence" value="ECO:0007669"/>
    <property type="project" value="UniProtKB-KW"/>
</dbReference>
<dbReference type="GO" id="GO:0008017">
    <property type="term" value="F:microtubule binding"/>
    <property type="evidence" value="ECO:0000250"/>
    <property type="project" value="UniProtKB"/>
</dbReference>
<dbReference type="GO" id="GO:0051301">
    <property type="term" value="P:cell division"/>
    <property type="evidence" value="ECO:0007669"/>
    <property type="project" value="UniProtKB-KW"/>
</dbReference>
<dbReference type="GO" id="GO:0007084">
    <property type="term" value="P:mitotic nuclear membrane reassembly"/>
    <property type="evidence" value="ECO:0000250"/>
    <property type="project" value="UniProtKB"/>
</dbReference>
<dbReference type="GO" id="GO:0006998">
    <property type="term" value="P:nuclear envelope organization"/>
    <property type="evidence" value="ECO:0000250"/>
    <property type="project" value="UniProtKB"/>
</dbReference>
<dbReference type="GO" id="GO:0001756">
    <property type="term" value="P:somitogenesis"/>
    <property type="evidence" value="ECO:0000315"/>
    <property type="project" value="Xenbase"/>
</dbReference>
<dbReference type="GO" id="GO:0036268">
    <property type="term" value="P:swimming"/>
    <property type="evidence" value="ECO:0000315"/>
    <property type="project" value="Xenbase"/>
</dbReference>
<dbReference type="InterPro" id="IPR004345">
    <property type="entry name" value="TB2_DP1_HVA22"/>
</dbReference>
<dbReference type="PANTHER" id="PTHR12300">
    <property type="entry name" value="HVA22-LIKE PROTEINS"/>
    <property type="match status" value="1"/>
</dbReference>
<dbReference type="PANTHER" id="PTHR12300:SF36">
    <property type="entry name" value="RECEPTOR EXPRESSION-ENHANCING PROTEIN 4"/>
    <property type="match status" value="1"/>
</dbReference>
<dbReference type="Pfam" id="PF03134">
    <property type="entry name" value="TB2_DP1_HVA22"/>
    <property type="match status" value="1"/>
</dbReference>
<gene>
    <name type="primary">reep4</name>
    <name type="ORF">TEgg068f10.1</name>
</gene>
<protein>
    <recommendedName>
        <fullName>Receptor expression-enhancing protein 4</fullName>
    </recommendedName>
</protein>
<comment type="function">
    <text evidence="1 4">Microtubule-binding protein required to ensure proper cell division and nuclear envelope reassembly by sequestering the endoplasmic reticulum away from chromosomes during mitosis. Probably acts by clearing the endoplasmic reticulum membrane from metaphase chromosomes (By similarity). May play a role in the maintenance of both the nervous system and the musculature.</text>
</comment>
<comment type="subunit">
    <text evidence="1">Interacts with microtubules.</text>
</comment>
<comment type="subcellular location">
    <subcellularLocation>
        <location evidence="1">Endoplasmic reticulum membrane</location>
        <topology evidence="1">Multi-pass membrane protein</topology>
    </subcellularLocation>
</comment>
<comment type="tissue specificity">
    <text>During gastrulation, expressed on the dorsal side of the embryo and then in the neural plate and neural tube. At tailbud stages, expressed in the somites. Expressed in the neural tube later in development.</text>
</comment>
<comment type="miscellaneous">
    <text evidence="6">Inactivation in embryos by antisense morpholino causes paralysis and shortening of the body axis.</text>
</comment>
<comment type="similarity">
    <text evidence="5">Belongs to the DP1 family.</text>
</comment>
<reference key="1">
    <citation type="submission" date="2005-07" db="EMBL/GenBank/DDBJ databases">
        <authorList>
            <consortium name="Sanger Xenopus tropicalis EST/cDNA project"/>
        </authorList>
    </citation>
    <scope>NUCLEOTIDE SEQUENCE [LARGE SCALE MRNA]</scope>
    <source>
        <tissue>Egg</tissue>
    </source>
</reference>
<reference key="2">
    <citation type="journal article" date="2010" name="Science">
        <title>The genome of the Western clawed frog Xenopus tropicalis.</title>
        <authorList>
            <person name="Hellsten U."/>
            <person name="Harland R.M."/>
            <person name="Gilchrist M.J."/>
            <person name="Hendrix D."/>
            <person name="Jurka J."/>
            <person name="Kapitonov V."/>
            <person name="Ovcharenko I."/>
            <person name="Putnam N.H."/>
            <person name="Shu S."/>
            <person name="Taher L."/>
            <person name="Blitz I.L."/>
            <person name="Blumberg B."/>
            <person name="Dichmann D.S."/>
            <person name="Dubchak I."/>
            <person name="Amaya E."/>
            <person name="Detter J.C."/>
            <person name="Fletcher R."/>
            <person name="Gerhard D.S."/>
            <person name="Goodstein D."/>
            <person name="Graves T."/>
            <person name="Grigoriev I.V."/>
            <person name="Grimwood J."/>
            <person name="Kawashima T."/>
            <person name="Lindquist E."/>
            <person name="Lucas S.M."/>
            <person name="Mead P.E."/>
            <person name="Mitros T."/>
            <person name="Ogino H."/>
            <person name="Ohta Y."/>
            <person name="Poliakov A.V."/>
            <person name="Pollet N."/>
            <person name="Robert J."/>
            <person name="Salamov A."/>
            <person name="Sater A.K."/>
            <person name="Schmutz J."/>
            <person name="Terry A."/>
            <person name="Vize P.D."/>
            <person name="Warren W.C."/>
            <person name="Wells D."/>
            <person name="Wills A."/>
            <person name="Wilson R.K."/>
            <person name="Zimmerman L.B."/>
            <person name="Zorn A.M."/>
            <person name="Grainger R."/>
            <person name="Grammer T."/>
            <person name="Khokha M.K."/>
            <person name="Richardson P.M."/>
            <person name="Rokhsar D.S."/>
        </authorList>
    </citation>
    <scope>NUCLEOTIDE SEQUENCE [LARGE SCALE GENOMIC DNA]</scope>
</reference>
<reference key="3">
    <citation type="submission" date="2005-02" db="EMBL/GenBank/DDBJ databases">
        <authorList>
            <consortium name="NIH - Xenopus Gene Collection (XGC) project"/>
        </authorList>
    </citation>
    <scope>NUCLEOTIDE SEQUENCE [LARGE SCALE MRNA]</scope>
    <source>
        <tissue>Embryo</tissue>
    </source>
</reference>
<reference key="4">
    <citation type="journal article" date="2009" name="Int. J. Dev. Biol.">
        <title>Loss of REEP4 causes paralysis of the Xenopus embryo.</title>
        <authorList>
            <person name="Argasinska J."/>
            <person name="Rana A.A."/>
            <person name="Gilchrist M.J."/>
            <person name="Lachani K."/>
            <person name="Young A."/>
            <person name="Smith J.C."/>
        </authorList>
    </citation>
    <scope>FUNCTION</scope>
    <scope>DEVELOPMENTAL STAGE</scope>
</reference>
<organism>
    <name type="scientific">Xenopus tropicalis</name>
    <name type="common">Western clawed frog</name>
    <name type="synonym">Silurana tropicalis</name>
    <dbReference type="NCBI Taxonomy" id="8364"/>
    <lineage>
        <taxon>Eukaryota</taxon>
        <taxon>Metazoa</taxon>
        <taxon>Chordata</taxon>
        <taxon>Craniata</taxon>
        <taxon>Vertebrata</taxon>
        <taxon>Euteleostomi</taxon>
        <taxon>Amphibia</taxon>
        <taxon>Batrachia</taxon>
        <taxon>Anura</taxon>
        <taxon>Pipoidea</taxon>
        <taxon>Pipidae</taxon>
        <taxon>Xenopodinae</taxon>
        <taxon>Xenopus</taxon>
        <taxon>Silurana</taxon>
    </lineage>
</organism>
<proteinExistence type="evidence at transcript level"/>
<evidence type="ECO:0000250" key="1"/>
<evidence type="ECO:0000255" key="2"/>
<evidence type="ECO:0000256" key="3">
    <source>
        <dbReference type="SAM" id="MobiDB-lite"/>
    </source>
</evidence>
<evidence type="ECO:0000269" key="4">
    <source>
    </source>
</evidence>
<evidence type="ECO:0000305" key="5"/>
<evidence type="ECO:0000305" key="6">
    <source>
    </source>
</evidence>
<keyword id="KW-0131">Cell cycle</keyword>
<keyword id="KW-0132">Cell division</keyword>
<keyword id="KW-0256">Endoplasmic reticulum</keyword>
<keyword id="KW-0472">Membrane</keyword>
<keyword id="KW-0493">Microtubule</keyword>
<keyword id="KW-0498">Mitosis</keyword>
<keyword id="KW-1185">Reference proteome</keyword>
<keyword id="KW-0812">Transmembrane</keyword>
<keyword id="KW-1133">Transmembrane helix</keyword>
<sequence length="261" mass="29826">MVSWIISRAVVLVFGLLYPAYASYKAVKTKNVREYVRWMMYWIVFALFMTVETFTDIFIAWFPFYYEIKMAFVVWLLSPYTRGASLLYRKCIHPTLSLKEKEIDSYIIQAKERSYESFVNIGRKGLNIAASAAVQAATKGQGALVGRLRSFSMQDLRALPDDTPIHYRDALYPDAPELHRRPIGYPTTSHADSDSMDERWSDSEMAETRTAARTRGGMPSKPLQRSQSLRVSKKKGLSREVSTKTTKPKGKKKPAQSEPEN</sequence>
<accession>Q5BL63</accession>
<accession>F7CB07</accession>
<name>REEP4_XENTR</name>